<accession>Q601F2</accession>
<organism>
    <name type="scientific">Mesomycoplasma hyopneumoniae (strain 232)</name>
    <name type="common">Mycoplasma hyopneumoniae</name>
    <dbReference type="NCBI Taxonomy" id="295358"/>
    <lineage>
        <taxon>Bacteria</taxon>
        <taxon>Bacillati</taxon>
        <taxon>Mycoplasmatota</taxon>
        <taxon>Mycoplasmoidales</taxon>
        <taxon>Metamycoplasmataceae</taxon>
        <taxon>Mesomycoplasma</taxon>
    </lineage>
</organism>
<keyword id="KW-0687">Ribonucleoprotein</keyword>
<keyword id="KW-0689">Ribosomal protein</keyword>
<keyword id="KW-0694">RNA-binding</keyword>
<keyword id="KW-0699">rRNA-binding</keyword>
<gene>
    <name evidence="1" type="primary">rplU</name>
    <name type="ordered locus">mhp250</name>
</gene>
<evidence type="ECO:0000255" key="1">
    <source>
        <dbReference type="HAMAP-Rule" id="MF_01363"/>
    </source>
</evidence>
<evidence type="ECO:0000305" key="2"/>
<dbReference type="EMBL" id="AE017332">
    <property type="protein sequence ID" value="AAV27790.1"/>
    <property type="molecule type" value="Genomic_DNA"/>
</dbReference>
<dbReference type="RefSeq" id="WP_011206087.1">
    <property type="nucleotide sequence ID" value="NC_006360.1"/>
</dbReference>
<dbReference type="SMR" id="Q601F2"/>
<dbReference type="KEGG" id="mhy:mhp250"/>
<dbReference type="eggNOG" id="COG0261">
    <property type="taxonomic scope" value="Bacteria"/>
</dbReference>
<dbReference type="HOGENOM" id="CLU_061463_3_1_14"/>
<dbReference type="PhylomeDB" id="Q601F2"/>
<dbReference type="Proteomes" id="UP000006822">
    <property type="component" value="Chromosome"/>
</dbReference>
<dbReference type="GO" id="GO:0005737">
    <property type="term" value="C:cytoplasm"/>
    <property type="evidence" value="ECO:0007669"/>
    <property type="project" value="UniProtKB-ARBA"/>
</dbReference>
<dbReference type="GO" id="GO:1990904">
    <property type="term" value="C:ribonucleoprotein complex"/>
    <property type="evidence" value="ECO:0007669"/>
    <property type="project" value="UniProtKB-KW"/>
</dbReference>
<dbReference type="GO" id="GO:0005840">
    <property type="term" value="C:ribosome"/>
    <property type="evidence" value="ECO:0007669"/>
    <property type="project" value="UniProtKB-KW"/>
</dbReference>
<dbReference type="GO" id="GO:0019843">
    <property type="term" value="F:rRNA binding"/>
    <property type="evidence" value="ECO:0007669"/>
    <property type="project" value="UniProtKB-UniRule"/>
</dbReference>
<dbReference type="GO" id="GO:0003735">
    <property type="term" value="F:structural constituent of ribosome"/>
    <property type="evidence" value="ECO:0007669"/>
    <property type="project" value="InterPro"/>
</dbReference>
<dbReference type="GO" id="GO:0006412">
    <property type="term" value="P:translation"/>
    <property type="evidence" value="ECO:0007669"/>
    <property type="project" value="UniProtKB-UniRule"/>
</dbReference>
<dbReference type="HAMAP" id="MF_01363">
    <property type="entry name" value="Ribosomal_bL21"/>
    <property type="match status" value="1"/>
</dbReference>
<dbReference type="InterPro" id="IPR028909">
    <property type="entry name" value="bL21-like"/>
</dbReference>
<dbReference type="InterPro" id="IPR036164">
    <property type="entry name" value="bL21-like_sf"/>
</dbReference>
<dbReference type="InterPro" id="IPR001787">
    <property type="entry name" value="Ribosomal_bL21"/>
</dbReference>
<dbReference type="NCBIfam" id="TIGR00061">
    <property type="entry name" value="L21"/>
    <property type="match status" value="1"/>
</dbReference>
<dbReference type="PANTHER" id="PTHR21349">
    <property type="entry name" value="50S RIBOSOMAL PROTEIN L21"/>
    <property type="match status" value="1"/>
</dbReference>
<dbReference type="PANTHER" id="PTHR21349:SF0">
    <property type="entry name" value="LARGE RIBOSOMAL SUBUNIT PROTEIN BL21M"/>
    <property type="match status" value="1"/>
</dbReference>
<dbReference type="Pfam" id="PF00829">
    <property type="entry name" value="Ribosomal_L21p"/>
    <property type="match status" value="1"/>
</dbReference>
<dbReference type="SUPFAM" id="SSF141091">
    <property type="entry name" value="L21p-like"/>
    <property type="match status" value="1"/>
</dbReference>
<protein>
    <recommendedName>
        <fullName evidence="1">Large ribosomal subunit protein bL21</fullName>
    </recommendedName>
    <alternativeName>
        <fullName evidence="2">50S ribosomal protein L21</fullName>
    </alternativeName>
</protein>
<feature type="chain" id="PRO_0000270689" description="Large ribosomal subunit protein bL21">
    <location>
        <begin position="1"/>
        <end position="99"/>
    </location>
</feature>
<reference key="1">
    <citation type="journal article" date="2004" name="J. Bacteriol.">
        <title>The genome sequence of Mycoplasma hyopneumoniae strain 232, the agent of swine mycoplasmosis.</title>
        <authorList>
            <person name="Minion F.C."/>
            <person name="Lefkowitz E.J."/>
            <person name="Madsen M.L."/>
            <person name="Cleary B.J."/>
            <person name="Swartzell S.M."/>
            <person name="Mahairas G.G."/>
        </authorList>
    </citation>
    <scope>NUCLEOTIDE SEQUENCE [LARGE SCALE GENOMIC DNA]</scope>
    <source>
        <strain>232</strain>
    </source>
</reference>
<comment type="function">
    <text evidence="1">This protein binds to 23S rRNA in the presence of protein L20.</text>
</comment>
<comment type="subunit">
    <text evidence="1">Part of the 50S ribosomal subunit. Contacts protein L20.</text>
</comment>
<comment type="similarity">
    <text evidence="1">Belongs to the bacterial ribosomal protein bL21 family.</text>
</comment>
<sequence>MFAIIKTSGRQLKVEKDQTIFVEKIDKNEGETITFTDILFINGKIGTPYVENASVTGIIEKQGKAKKIVVYRHNPKSTHKRKLGHRQLFTKVKITELKG</sequence>
<proteinExistence type="inferred from homology"/>
<name>RL21_MESH2</name>